<sequence length="427" mass="45798">MKLKTNIRHLHGSIRVPGDKSISHRSIIFGSLAEGETKVYDILRGEDVLSTMQVFRDLGVEIEDKDGVITVQGVGMAGLKAPQNALNMGNSGTSIRLISGVLAGADFEVEMFGDDSLSKRPMDRVTLPLKKMGVSISGQTERDLPPLRLKGTKNLRPIHYELPIASAQVKSALMFAALQAKGESVIIEKEYTRNHTEDMLQQFGGHLSVDGKKITVQGPQKLTGQKVVVPGDISSAAFWLVAGLIAPNSRLVLQNVGINETRTGIIDVIRAMGGKLEITEIDPVAKSATLIVESSDLKGTEICGALIPRLIDELPIIALLATQAQGVTVIKDAEELKVKETDRIQVVADALNSMGADITPTADGMIIKGKSALHGARVNTFGDHRIGMMTAIAALLVADGEVELDRAEAINTSYPSFFDDLESLIHG</sequence>
<name>AROA_STRP4</name>
<organism>
    <name type="scientific">Streptococcus pneumoniae serotype 19F (strain G54)</name>
    <dbReference type="NCBI Taxonomy" id="512566"/>
    <lineage>
        <taxon>Bacteria</taxon>
        <taxon>Bacillati</taxon>
        <taxon>Bacillota</taxon>
        <taxon>Bacilli</taxon>
        <taxon>Lactobacillales</taxon>
        <taxon>Streptococcaceae</taxon>
        <taxon>Streptococcus</taxon>
    </lineage>
</organism>
<dbReference type="EC" id="2.5.1.19" evidence="1"/>
<dbReference type="EMBL" id="CP001015">
    <property type="protein sequence ID" value="ACF55539.1"/>
    <property type="molecule type" value="Genomic_DNA"/>
</dbReference>
<dbReference type="SMR" id="B5E5M9"/>
<dbReference type="KEGG" id="spx:SPG_1312"/>
<dbReference type="HOGENOM" id="CLU_024321_0_1_9"/>
<dbReference type="UniPathway" id="UPA00053">
    <property type="reaction ID" value="UER00089"/>
</dbReference>
<dbReference type="GO" id="GO:0005737">
    <property type="term" value="C:cytoplasm"/>
    <property type="evidence" value="ECO:0007669"/>
    <property type="project" value="UniProtKB-SubCell"/>
</dbReference>
<dbReference type="GO" id="GO:0003866">
    <property type="term" value="F:3-phosphoshikimate 1-carboxyvinyltransferase activity"/>
    <property type="evidence" value="ECO:0007669"/>
    <property type="project" value="UniProtKB-UniRule"/>
</dbReference>
<dbReference type="GO" id="GO:0008652">
    <property type="term" value="P:amino acid biosynthetic process"/>
    <property type="evidence" value="ECO:0007669"/>
    <property type="project" value="UniProtKB-KW"/>
</dbReference>
<dbReference type="GO" id="GO:0009073">
    <property type="term" value="P:aromatic amino acid family biosynthetic process"/>
    <property type="evidence" value="ECO:0007669"/>
    <property type="project" value="UniProtKB-KW"/>
</dbReference>
<dbReference type="GO" id="GO:0009423">
    <property type="term" value="P:chorismate biosynthetic process"/>
    <property type="evidence" value="ECO:0007669"/>
    <property type="project" value="UniProtKB-UniRule"/>
</dbReference>
<dbReference type="CDD" id="cd01554">
    <property type="entry name" value="EPT-like"/>
    <property type="match status" value="1"/>
</dbReference>
<dbReference type="FunFam" id="3.65.10.10:FF:000005">
    <property type="entry name" value="3-phosphoshikimate 1-carboxyvinyltransferase"/>
    <property type="match status" value="1"/>
</dbReference>
<dbReference type="FunFam" id="3.65.10.10:FF:000006">
    <property type="entry name" value="3-phosphoshikimate 1-carboxyvinyltransferase"/>
    <property type="match status" value="1"/>
</dbReference>
<dbReference type="Gene3D" id="3.65.10.10">
    <property type="entry name" value="Enolpyruvate transferase domain"/>
    <property type="match status" value="2"/>
</dbReference>
<dbReference type="HAMAP" id="MF_00210">
    <property type="entry name" value="EPSP_synth"/>
    <property type="match status" value="1"/>
</dbReference>
<dbReference type="InterPro" id="IPR001986">
    <property type="entry name" value="Enolpyruvate_Tfrase_dom"/>
</dbReference>
<dbReference type="InterPro" id="IPR036968">
    <property type="entry name" value="Enolpyruvate_Tfrase_sf"/>
</dbReference>
<dbReference type="InterPro" id="IPR006264">
    <property type="entry name" value="EPSP_synthase"/>
</dbReference>
<dbReference type="InterPro" id="IPR023193">
    <property type="entry name" value="EPSP_synthase_CS"/>
</dbReference>
<dbReference type="InterPro" id="IPR013792">
    <property type="entry name" value="RNA3'P_cycl/enolpyr_Trfase_a/b"/>
</dbReference>
<dbReference type="NCBIfam" id="TIGR01356">
    <property type="entry name" value="aroA"/>
    <property type="match status" value="1"/>
</dbReference>
<dbReference type="PANTHER" id="PTHR21090">
    <property type="entry name" value="AROM/DEHYDROQUINATE SYNTHASE"/>
    <property type="match status" value="1"/>
</dbReference>
<dbReference type="PANTHER" id="PTHR21090:SF5">
    <property type="entry name" value="PENTAFUNCTIONAL AROM POLYPEPTIDE"/>
    <property type="match status" value="1"/>
</dbReference>
<dbReference type="Pfam" id="PF00275">
    <property type="entry name" value="EPSP_synthase"/>
    <property type="match status" value="1"/>
</dbReference>
<dbReference type="PIRSF" id="PIRSF000505">
    <property type="entry name" value="EPSPS"/>
    <property type="match status" value="1"/>
</dbReference>
<dbReference type="SUPFAM" id="SSF55205">
    <property type="entry name" value="EPT/RTPC-like"/>
    <property type="match status" value="1"/>
</dbReference>
<dbReference type="PROSITE" id="PS00104">
    <property type="entry name" value="EPSP_SYNTHASE_1"/>
    <property type="match status" value="1"/>
</dbReference>
<dbReference type="PROSITE" id="PS00885">
    <property type="entry name" value="EPSP_SYNTHASE_2"/>
    <property type="match status" value="1"/>
</dbReference>
<keyword id="KW-0028">Amino-acid biosynthesis</keyword>
<keyword id="KW-0057">Aromatic amino acid biosynthesis</keyword>
<keyword id="KW-0963">Cytoplasm</keyword>
<keyword id="KW-0808">Transferase</keyword>
<comment type="function">
    <text evidence="1">Catalyzes the transfer of the enolpyruvyl moiety of phosphoenolpyruvate (PEP) to the 5-hydroxyl of shikimate-3-phosphate (S3P) to produce enolpyruvyl shikimate-3-phosphate and inorganic phosphate.</text>
</comment>
<comment type="catalytic activity">
    <reaction evidence="1">
        <text>3-phosphoshikimate + phosphoenolpyruvate = 5-O-(1-carboxyvinyl)-3-phosphoshikimate + phosphate</text>
        <dbReference type="Rhea" id="RHEA:21256"/>
        <dbReference type="ChEBI" id="CHEBI:43474"/>
        <dbReference type="ChEBI" id="CHEBI:57701"/>
        <dbReference type="ChEBI" id="CHEBI:58702"/>
        <dbReference type="ChEBI" id="CHEBI:145989"/>
        <dbReference type="EC" id="2.5.1.19"/>
    </reaction>
    <physiologicalReaction direction="left-to-right" evidence="1">
        <dbReference type="Rhea" id="RHEA:21257"/>
    </physiologicalReaction>
</comment>
<comment type="pathway">
    <text evidence="1">Metabolic intermediate biosynthesis; chorismate biosynthesis; chorismate from D-erythrose 4-phosphate and phosphoenolpyruvate: step 6/7.</text>
</comment>
<comment type="subunit">
    <text evidence="1">Monomer.</text>
</comment>
<comment type="subcellular location">
    <subcellularLocation>
        <location evidence="1">Cytoplasm</location>
    </subcellularLocation>
</comment>
<comment type="similarity">
    <text evidence="1">Belongs to the EPSP synthase family.</text>
</comment>
<reference key="1">
    <citation type="journal article" date="2001" name="Microb. Drug Resist.">
        <title>Annotated draft genomic sequence from a Streptococcus pneumoniae type 19F clinical isolate.</title>
        <authorList>
            <person name="Dopazo J."/>
            <person name="Mendoza A."/>
            <person name="Herrero J."/>
            <person name="Caldara F."/>
            <person name="Humbert Y."/>
            <person name="Friedli L."/>
            <person name="Guerrier M."/>
            <person name="Grand-Schenk E."/>
            <person name="Gandin C."/>
            <person name="de Francesco M."/>
            <person name="Polissi A."/>
            <person name="Buell G."/>
            <person name="Feger G."/>
            <person name="Garcia E."/>
            <person name="Peitsch M."/>
            <person name="Garcia-Bustos J.F."/>
        </authorList>
    </citation>
    <scope>NUCLEOTIDE SEQUENCE [LARGE SCALE GENOMIC DNA]</scope>
    <source>
        <strain>G54</strain>
    </source>
</reference>
<reference key="2">
    <citation type="submission" date="2008-03" db="EMBL/GenBank/DDBJ databases">
        <title>Pneumococcal beta glucoside metabolism investigated by whole genome comparison.</title>
        <authorList>
            <person name="Mulas L."/>
            <person name="Trappetti C."/>
            <person name="Hakenbeck R."/>
            <person name="Iannelli F."/>
            <person name="Pozzi G."/>
            <person name="Davidsen T.M."/>
            <person name="Tettelin H."/>
            <person name="Oggioni M."/>
        </authorList>
    </citation>
    <scope>NUCLEOTIDE SEQUENCE [LARGE SCALE GENOMIC DNA]</scope>
    <source>
        <strain>G54</strain>
    </source>
</reference>
<proteinExistence type="inferred from homology"/>
<gene>
    <name evidence="1" type="primary">aroA</name>
    <name type="ordered locus">SPG_1312</name>
</gene>
<feature type="chain" id="PRO_1000099756" description="3-phosphoshikimate 1-carboxyvinyltransferase">
    <location>
        <begin position="1"/>
        <end position="427"/>
    </location>
</feature>
<feature type="active site" description="Proton acceptor" evidence="1">
    <location>
        <position position="312"/>
    </location>
</feature>
<feature type="binding site" evidence="1">
    <location>
        <position position="20"/>
    </location>
    <ligand>
        <name>3-phosphoshikimate</name>
        <dbReference type="ChEBI" id="CHEBI:145989"/>
    </ligand>
</feature>
<feature type="binding site" evidence="1">
    <location>
        <position position="20"/>
    </location>
    <ligand>
        <name>phosphoenolpyruvate</name>
        <dbReference type="ChEBI" id="CHEBI:58702"/>
    </ligand>
</feature>
<feature type="binding site" evidence="1">
    <location>
        <position position="21"/>
    </location>
    <ligand>
        <name>3-phosphoshikimate</name>
        <dbReference type="ChEBI" id="CHEBI:145989"/>
    </ligand>
</feature>
<feature type="binding site" evidence="1">
    <location>
        <position position="25"/>
    </location>
    <ligand>
        <name>3-phosphoshikimate</name>
        <dbReference type="ChEBI" id="CHEBI:145989"/>
    </ligand>
</feature>
<feature type="binding site" evidence="1">
    <location>
        <position position="92"/>
    </location>
    <ligand>
        <name>phosphoenolpyruvate</name>
        <dbReference type="ChEBI" id="CHEBI:58702"/>
    </ligand>
</feature>
<feature type="binding site" evidence="1">
    <location>
        <position position="120"/>
    </location>
    <ligand>
        <name>phosphoenolpyruvate</name>
        <dbReference type="ChEBI" id="CHEBI:58702"/>
    </ligand>
</feature>
<feature type="binding site" evidence="1">
    <location>
        <position position="166"/>
    </location>
    <ligand>
        <name>3-phosphoshikimate</name>
        <dbReference type="ChEBI" id="CHEBI:145989"/>
    </ligand>
</feature>
<feature type="binding site" evidence="1">
    <location>
        <position position="168"/>
    </location>
    <ligand>
        <name>3-phosphoshikimate</name>
        <dbReference type="ChEBI" id="CHEBI:145989"/>
    </ligand>
</feature>
<feature type="binding site" evidence="1">
    <location>
        <position position="168"/>
    </location>
    <ligand>
        <name>phosphoenolpyruvate</name>
        <dbReference type="ChEBI" id="CHEBI:58702"/>
    </ligand>
</feature>
<feature type="binding site" evidence="1">
    <location>
        <position position="312"/>
    </location>
    <ligand>
        <name>3-phosphoshikimate</name>
        <dbReference type="ChEBI" id="CHEBI:145989"/>
    </ligand>
</feature>
<feature type="binding site" evidence="1">
    <location>
        <position position="339"/>
    </location>
    <ligand>
        <name>3-phosphoshikimate</name>
        <dbReference type="ChEBI" id="CHEBI:145989"/>
    </ligand>
</feature>
<feature type="binding site" evidence="1">
    <location>
        <position position="343"/>
    </location>
    <ligand>
        <name>phosphoenolpyruvate</name>
        <dbReference type="ChEBI" id="CHEBI:58702"/>
    </ligand>
</feature>
<feature type="binding site" evidence="1">
    <location>
        <position position="385"/>
    </location>
    <ligand>
        <name>phosphoenolpyruvate</name>
        <dbReference type="ChEBI" id="CHEBI:58702"/>
    </ligand>
</feature>
<protein>
    <recommendedName>
        <fullName evidence="1">3-phosphoshikimate 1-carboxyvinyltransferase</fullName>
        <ecNumber evidence="1">2.5.1.19</ecNumber>
    </recommendedName>
    <alternativeName>
        <fullName evidence="1">5-enolpyruvylshikimate-3-phosphate synthase</fullName>
        <shortName evidence="1">EPSP synthase</shortName>
        <shortName evidence="1">EPSPS</shortName>
    </alternativeName>
</protein>
<accession>B5E5M9</accession>
<evidence type="ECO:0000255" key="1">
    <source>
        <dbReference type="HAMAP-Rule" id="MF_00210"/>
    </source>
</evidence>